<gene>
    <name type="primary">RTNLB13</name>
    <name type="ordered locus">At2g23640</name>
    <name type="ORF">F26B6.29</name>
    <name type="ORF">F27L4.17</name>
</gene>
<dbReference type="EMBL" id="AC003040">
    <property type="protein sequence ID" value="AAM14868.1"/>
    <property type="molecule type" value="Genomic_DNA"/>
</dbReference>
<dbReference type="EMBL" id="AC004482">
    <property type="protein sequence ID" value="AAC17096.1"/>
    <property type="molecule type" value="Genomic_DNA"/>
</dbReference>
<dbReference type="EMBL" id="CP002685">
    <property type="protein sequence ID" value="AEC07475.1"/>
    <property type="molecule type" value="Genomic_DNA"/>
</dbReference>
<dbReference type="EMBL" id="BX822075">
    <property type="status" value="NOT_ANNOTATED_CDS"/>
    <property type="molecule type" value="mRNA"/>
</dbReference>
<dbReference type="PIR" id="T01153">
    <property type="entry name" value="T01153"/>
</dbReference>
<dbReference type="RefSeq" id="NP_565555.1">
    <property type="nucleotide sequence ID" value="NM_127928.3"/>
</dbReference>
<dbReference type="SMR" id="O64837"/>
<dbReference type="BioGRID" id="2248">
    <property type="interactions" value="3"/>
</dbReference>
<dbReference type="FunCoup" id="O64837">
    <property type="interactions" value="17"/>
</dbReference>
<dbReference type="STRING" id="3702.O64837"/>
<dbReference type="TCDB" id="8.A.102.1.7">
    <property type="family name" value="the reticulon (reticulon) family"/>
</dbReference>
<dbReference type="PaxDb" id="3702-AT2G23640.1"/>
<dbReference type="ProteomicsDB" id="228069"/>
<dbReference type="EnsemblPlants" id="AT2G23640.1">
    <property type="protein sequence ID" value="AT2G23640.1"/>
    <property type="gene ID" value="AT2G23640"/>
</dbReference>
<dbReference type="GeneID" id="816896"/>
<dbReference type="Gramene" id="AT2G23640.1">
    <property type="protein sequence ID" value="AT2G23640.1"/>
    <property type="gene ID" value="AT2G23640"/>
</dbReference>
<dbReference type="KEGG" id="ath:AT2G23640"/>
<dbReference type="Araport" id="AT2G23640"/>
<dbReference type="TAIR" id="AT2G23640">
    <property type="gene designation" value="RTNLB13"/>
</dbReference>
<dbReference type="eggNOG" id="KOG1792">
    <property type="taxonomic scope" value="Eukaryota"/>
</dbReference>
<dbReference type="HOGENOM" id="CLU_066344_2_1_1"/>
<dbReference type="InParanoid" id="O64837"/>
<dbReference type="OMA" id="WMFRVGA"/>
<dbReference type="PhylomeDB" id="O64837"/>
<dbReference type="PRO" id="PR:O64837"/>
<dbReference type="Proteomes" id="UP000006548">
    <property type="component" value="Chromosome 2"/>
</dbReference>
<dbReference type="ExpressionAtlas" id="O64837">
    <property type="expression patterns" value="baseline and differential"/>
</dbReference>
<dbReference type="GO" id="GO:0098554">
    <property type="term" value="C:cytoplasmic side of endoplasmic reticulum membrane"/>
    <property type="evidence" value="ECO:0000314"/>
    <property type="project" value="UniProtKB"/>
</dbReference>
<dbReference type="GO" id="GO:0005789">
    <property type="term" value="C:endoplasmic reticulum membrane"/>
    <property type="evidence" value="ECO:0000314"/>
    <property type="project" value="TAIR"/>
</dbReference>
<dbReference type="GO" id="GO:0071782">
    <property type="term" value="C:endoplasmic reticulum tubular network"/>
    <property type="evidence" value="ECO:0000314"/>
    <property type="project" value="UniProtKB"/>
</dbReference>
<dbReference type="GO" id="GO:0071786">
    <property type="term" value="P:endoplasmic reticulum tubular network organization"/>
    <property type="evidence" value="ECO:0000315"/>
    <property type="project" value="UniProtKB"/>
</dbReference>
<dbReference type="GO" id="GO:0009617">
    <property type="term" value="P:response to bacterium"/>
    <property type="evidence" value="ECO:0007669"/>
    <property type="project" value="InterPro"/>
</dbReference>
<dbReference type="InterPro" id="IPR003388">
    <property type="entry name" value="Reticulon"/>
</dbReference>
<dbReference type="InterPro" id="IPR045064">
    <property type="entry name" value="Reticulon-like"/>
</dbReference>
<dbReference type="PANTHER" id="PTHR10994">
    <property type="entry name" value="RETICULON"/>
    <property type="match status" value="1"/>
</dbReference>
<dbReference type="PANTHER" id="PTHR10994:SF145">
    <property type="entry name" value="RETICULON-LIKE PROTEIN B13"/>
    <property type="match status" value="1"/>
</dbReference>
<dbReference type="Pfam" id="PF02453">
    <property type="entry name" value="Reticulon"/>
    <property type="match status" value="1"/>
</dbReference>
<dbReference type="PROSITE" id="PS50845">
    <property type="entry name" value="RETICULON"/>
    <property type="match status" value="1"/>
</dbReference>
<evidence type="ECO:0000255" key="1"/>
<evidence type="ECO:0000255" key="2">
    <source>
        <dbReference type="PROSITE-ProRule" id="PRU00170"/>
    </source>
</evidence>
<evidence type="ECO:0000269" key="3">
    <source>
    </source>
</evidence>
<evidence type="ECO:0000305" key="4"/>
<organism>
    <name type="scientific">Arabidopsis thaliana</name>
    <name type="common">Mouse-ear cress</name>
    <dbReference type="NCBI Taxonomy" id="3702"/>
    <lineage>
        <taxon>Eukaryota</taxon>
        <taxon>Viridiplantae</taxon>
        <taxon>Streptophyta</taxon>
        <taxon>Embryophyta</taxon>
        <taxon>Tracheophyta</taxon>
        <taxon>Spermatophyta</taxon>
        <taxon>Magnoliopsida</taxon>
        <taxon>eudicotyledons</taxon>
        <taxon>Gunneridae</taxon>
        <taxon>Pentapetalae</taxon>
        <taxon>rosids</taxon>
        <taxon>malvids</taxon>
        <taxon>Brassicales</taxon>
        <taxon>Brassicaceae</taxon>
        <taxon>Camelineae</taxon>
        <taxon>Arabidopsis</taxon>
    </lineage>
</organism>
<feature type="chain" id="PRO_0000371294" description="Reticulon-like protein B13">
    <location>
        <begin position="1"/>
        <end position="206"/>
    </location>
</feature>
<feature type="transmembrane region" description="Helical" evidence="1">
    <location>
        <begin position="27"/>
        <end position="47"/>
    </location>
</feature>
<feature type="transmembrane region" description="Helical" evidence="1">
    <location>
        <begin position="50"/>
        <end position="70"/>
    </location>
</feature>
<feature type="transmembrane region" description="Helical" evidence="1">
    <location>
        <begin position="134"/>
        <end position="154"/>
    </location>
</feature>
<feature type="domain" description="Reticulon" evidence="2">
    <location>
        <begin position="16"/>
        <end position="206"/>
    </location>
</feature>
<feature type="sequence conflict" description="In Ref. 3." evidence="4" ref="3">
    <original>E</original>
    <variation>K</variation>
    <location>
        <position position="117"/>
    </location>
</feature>
<accession>O64837</accession>
<comment type="subcellular location">
    <subcellularLocation>
        <location evidence="3">Endoplasmic reticulum membrane</location>
        <topology evidence="3">Multi-pass membrane protein</topology>
    </subcellularLocation>
</comment>
<proteinExistence type="evidence at transcript level"/>
<sequence length="206" mass="23771">MANDVTKDPTPKSDIVEDIYLWRRKKLAFSTLLVSTSTWILLSFYGFTTITIVSWIGIAVVSMIFLWGSLLRLLSKVEPELSGLEVSEEFVVETVRSCRMLMEEMVRWMFRVGAESEWFVFARTVLGFWILSRIGNLLDFHTCLFIGLVMGLTVPKLWEEYGDQIQKHLGSLKDKSKGAYNTTHEKILEMKNKLHHGTEEKVKKSE</sequence>
<protein>
    <recommendedName>
        <fullName>Reticulon-like protein B13</fullName>
        <shortName>AtRTNLB13</shortName>
    </recommendedName>
</protein>
<keyword id="KW-0256">Endoplasmic reticulum</keyword>
<keyword id="KW-0472">Membrane</keyword>
<keyword id="KW-1185">Reference proteome</keyword>
<keyword id="KW-0812">Transmembrane</keyword>
<keyword id="KW-1133">Transmembrane helix</keyword>
<reference key="1">
    <citation type="journal article" date="1999" name="Nature">
        <title>Sequence and analysis of chromosome 2 of the plant Arabidopsis thaliana.</title>
        <authorList>
            <person name="Lin X."/>
            <person name="Kaul S."/>
            <person name="Rounsley S.D."/>
            <person name="Shea T.P."/>
            <person name="Benito M.-I."/>
            <person name="Town C.D."/>
            <person name="Fujii C.Y."/>
            <person name="Mason T.M."/>
            <person name="Bowman C.L."/>
            <person name="Barnstead M.E."/>
            <person name="Feldblyum T.V."/>
            <person name="Buell C.R."/>
            <person name="Ketchum K.A."/>
            <person name="Lee J.J."/>
            <person name="Ronning C.M."/>
            <person name="Koo H.L."/>
            <person name="Moffat K.S."/>
            <person name="Cronin L.A."/>
            <person name="Shen M."/>
            <person name="Pai G."/>
            <person name="Van Aken S."/>
            <person name="Umayam L."/>
            <person name="Tallon L.J."/>
            <person name="Gill J.E."/>
            <person name="Adams M.D."/>
            <person name="Carrera A.J."/>
            <person name="Creasy T.H."/>
            <person name="Goodman H.M."/>
            <person name="Somerville C.R."/>
            <person name="Copenhaver G.P."/>
            <person name="Preuss D."/>
            <person name="Nierman W.C."/>
            <person name="White O."/>
            <person name="Eisen J.A."/>
            <person name="Salzberg S.L."/>
            <person name="Fraser C.M."/>
            <person name="Venter J.C."/>
        </authorList>
    </citation>
    <scope>NUCLEOTIDE SEQUENCE [LARGE SCALE GENOMIC DNA]</scope>
    <source>
        <strain>cv. Columbia</strain>
    </source>
</reference>
<reference key="2">
    <citation type="journal article" date="2017" name="Plant J.">
        <title>Araport11: a complete reannotation of the Arabidopsis thaliana reference genome.</title>
        <authorList>
            <person name="Cheng C.Y."/>
            <person name="Krishnakumar V."/>
            <person name="Chan A.P."/>
            <person name="Thibaud-Nissen F."/>
            <person name="Schobel S."/>
            <person name="Town C.D."/>
        </authorList>
    </citation>
    <scope>GENOME REANNOTATION</scope>
    <source>
        <strain>cv. Columbia</strain>
    </source>
</reference>
<reference key="3">
    <citation type="journal article" date="2004" name="Genome Res.">
        <title>Whole genome sequence comparisons and 'full-length' cDNA sequences: a combined approach to evaluate and improve Arabidopsis genome annotation.</title>
        <authorList>
            <person name="Castelli V."/>
            <person name="Aury J.-M."/>
            <person name="Jaillon O."/>
            <person name="Wincker P."/>
            <person name="Clepet C."/>
            <person name="Menard M."/>
            <person name="Cruaud C."/>
            <person name="Quetier F."/>
            <person name="Scarpelli C."/>
            <person name="Schaechter V."/>
            <person name="Temple G."/>
            <person name="Caboche M."/>
            <person name="Weissenbach J."/>
            <person name="Salanoubat M."/>
        </authorList>
    </citation>
    <scope>NUCLEOTIDE SEQUENCE [LARGE SCALE MRNA] OF 7-206</scope>
    <source>
        <strain>cv. Columbia</strain>
    </source>
</reference>
<reference key="4">
    <citation type="journal article" date="2007" name="FEBS Lett.">
        <title>Reticulon-like proteins in Arabidopsis thaliana: structural organization and ER localization.</title>
        <authorList>
            <person name="Nziengui H."/>
            <person name="Bouhidel K."/>
            <person name="Pillon D."/>
            <person name="Der C."/>
            <person name="Marty F."/>
            <person name="Schoefs B."/>
        </authorList>
    </citation>
    <scope>GENE FAMILY</scope>
    <scope>NOMENCLATURE</scope>
</reference>
<reference key="5">
    <citation type="journal article" date="2008" name="Traffic">
        <title>Overexpression of a plant reticulon remodels the lumen of the cortical endoplasmic reticulum but does not perturb protein transport.</title>
        <authorList>
            <person name="Tolley N."/>
            <person name="Sparkes I.A."/>
            <person name="Hunter P.R."/>
            <person name="Craddock C.P."/>
            <person name="Nuttall J."/>
            <person name="Roberts L.M."/>
            <person name="Hawes C."/>
            <person name="Pedrazzini E."/>
            <person name="Frigerio L."/>
        </authorList>
    </citation>
    <scope>SUBCELLULAR LOCATION</scope>
</reference>
<name>RTNLM_ARATH</name>